<gene>
    <name evidence="1" type="primary">murB</name>
    <name type="ordered locus">XCV1834</name>
</gene>
<organism>
    <name type="scientific">Xanthomonas euvesicatoria pv. vesicatoria (strain 85-10)</name>
    <name type="common">Xanthomonas campestris pv. vesicatoria</name>
    <dbReference type="NCBI Taxonomy" id="316273"/>
    <lineage>
        <taxon>Bacteria</taxon>
        <taxon>Pseudomonadati</taxon>
        <taxon>Pseudomonadota</taxon>
        <taxon>Gammaproteobacteria</taxon>
        <taxon>Lysobacterales</taxon>
        <taxon>Lysobacteraceae</taxon>
        <taxon>Xanthomonas</taxon>
    </lineage>
</organism>
<dbReference type="EC" id="1.3.1.98" evidence="1"/>
<dbReference type="EMBL" id="AM039952">
    <property type="protein sequence ID" value="CAJ23511.1"/>
    <property type="molecule type" value="Genomic_DNA"/>
</dbReference>
<dbReference type="RefSeq" id="WP_011347155.1">
    <property type="nucleotide sequence ID" value="NZ_CP017190.1"/>
</dbReference>
<dbReference type="SMR" id="Q3BUJ8"/>
<dbReference type="STRING" id="456327.BJD11_13330"/>
<dbReference type="KEGG" id="xcv:XCV1834"/>
<dbReference type="eggNOG" id="COG0812">
    <property type="taxonomic scope" value="Bacteria"/>
</dbReference>
<dbReference type="HOGENOM" id="CLU_035304_0_0_6"/>
<dbReference type="UniPathway" id="UPA00219"/>
<dbReference type="Proteomes" id="UP000007069">
    <property type="component" value="Chromosome"/>
</dbReference>
<dbReference type="GO" id="GO:0005829">
    <property type="term" value="C:cytosol"/>
    <property type="evidence" value="ECO:0007669"/>
    <property type="project" value="TreeGrafter"/>
</dbReference>
<dbReference type="GO" id="GO:0071949">
    <property type="term" value="F:FAD binding"/>
    <property type="evidence" value="ECO:0007669"/>
    <property type="project" value="InterPro"/>
</dbReference>
<dbReference type="GO" id="GO:0008762">
    <property type="term" value="F:UDP-N-acetylmuramate dehydrogenase activity"/>
    <property type="evidence" value="ECO:0007669"/>
    <property type="project" value="UniProtKB-UniRule"/>
</dbReference>
<dbReference type="GO" id="GO:0051301">
    <property type="term" value="P:cell division"/>
    <property type="evidence" value="ECO:0007669"/>
    <property type="project" value="UniProtKB-KW"/>
</dbReference>
<dbReference type="GO" id="GO:0071555">
    <property type="term" value="P:cell wall organization"/>
    <property type="evidence" value="ECO:0007669"/>
    <property type="project" value="UniProtKB-KW"/>
</dbReference>
<dbReference type="GO" id="GO:0009252">
    <property type="term" value="P:peptidoglycan biosynthetic process"/>
    <property type="evidence" value="ECO:0007669"/>
    <property type="project" value="UniProtKB-UniRule"/>
</dbReference>
<dbReference type="GO" id="GO:0008360">
    <property type="term" value="P:regulation of cell shape"/>
    <property type="evidence" value="ECO:0007669"/>
    <property type="project" value="UniProtKB-KW"/>
</dbReference>
<dbReference type="Gene3D" id="3.30.465.10">
    <property type="match status" value="1"/>
</dbReference>
<dbReference type="Gene3D" id="3.90.78.10">
    <property type="entry name" value="UDP-N-acetylenolpyruvoylglucosamine reductase, C-terminal domain"/>
    <property type="match status" value="1"/>
</dbReference>
<dbReference type="Gene3D" id="3.30.43.10">
    <property type="entry name" value="Uridine Diphospho-n-acetylenolpyruvylglucosamine Reductase, domain 2"/>
    <property type="match status" value="1"/>
</dbReference>
<dbReference type="HAMAP" id="MF_00037">
    <property type="entry name" value="MurB"/>
    <property type="match status" value="1"/>
</dbReference>
<dbReference type="InterPro" id="IPR016166">
    <property type="entry name" value="FAD-bd_PCMH"/>
</dbReference>
<dbReference type="InterPro" id="IPR036318">
    <property type="entry name" value="FAD-bd_PCMH-like_sf"/>
</dbReference>
<dbReference type="InterPro" id="IPR016167">
    <property type="entry name" value="FAD-bd_PCMH_sub1"/>
</dbReference>
<dbReference type="InterPro" id="IPR016169">
    <property type="entry name" value="FAD-bd_PCMH_sub2"/>
</dbReference>
<dbReference type="InterPro" id="IPR003170">
    <property type="entry name" value="MurB"/>
</dbReference>
<dbReference type="InterPro" id="IPR011601">
    <property type="entry name" value="MurB_C"/>
</dbReference>
<dbReference type="InterPro" id="IPR036635">
    <property type="entry name" value="MurB_C_sf"/>
</dbReference>
<dbReference type="InterPro" id="IPR006094">
    <property type="entry name" value="Oxid_FAD_bind_N"/>
</dbReference>
<dbReference type="NCBIfam" id="TIGR00179">
    <property type="entry name" value="murB"/>
    <property type="match status" value="1"/>
</dbReference>
<dbReference type="NCBIfam" id="NF000755">
    <property type="entry name" value="PRK00046.1"/>
    <property type="match status" value="1"/>
</dbReference>
<dbReference type="NCBIfam" id="NF010478">
    <property type="entry name" value="PRK13903.1"/>
    <property type="match status" value="1"/>
</dbReference>
<dbReference type="PANTHER" id="PTHR21071">
    <property type="entry name" value="UDP-N-ACETYLENOLPYRUVOYLGLUCOSAMINE REDUCTASE"/>
    <property type="match status" value="1"/>
</dbReference>
<dbReference type="PANTHER" id="PTHR21071:SF4">
    <property type="entry name" value="UDP-N-ACETYLENOLPYRUVOYLGLUCOSAMINE REDUCTASE"/>
    <property type="match status" value="1"/>
</dbReference>
<dbReference type="Pfam" id="PF01565">
    <property type="entry name" value="FAD_binding_4"/>
    <property type="match status" value="1"/>
</dbReference>
<dbReference type="Pfam" id="PF02873">
    <property type="entry name" value="MurB_C"/>
    <property type="match status" value="1"/>
</dbReference>
<dbReference type="SUPFAM" id="SSF56176">
    <property type="entry name" value="FAD-binding/transporter-associated domain-like"/>
    <property type="match status" value="1"/>
</dbReference>
<dbReference type="SUPFAM" id="SSF56194">
    <property type="entry name" value="Uridine diphospho-N-Acetylenolpyruvylglucosamine reductase, MurB, C-terminal domain"/>
    <property type="match status" value="1"/>
</dbReference>
<dbReference type="PROSITE" id="PS51387">
    <property type="entry name" value="FAD_PCMH"/>
    <property type="match status" value="1"/>
</dbReference>
<reference key="1">
    <citation type="journal article" date="2005" name="J. Bacteriol.">
        <title>Insights into genome plasticity and pathogenicity of the plant pathogenic Bacterium Xanthomonas campestris pv. vesicatoria revealed by the complete genome sequence.</title>
        <authorList>
            <person name="Thieme F."/>
            <person name="Koebnik R."/>
            <person name="Bekel T."/>
            <person name="Berger C."/>
            <person name="Boch J."/>
            <person name="Buettner D."/>
            <person name="Caldana C."/>
            <person name="Gaigalat L."/>
            <person name="Goesmann A."/>
            <person name="Kay S."/>
            <person name="Kirchner O."/>
            <person name="Lanz C."/>
            <person name="Linke B."/>
            <person name="McHardy A.C."/>
            <person name="Meyer F."/>
            <person name="Mittenhuber G."/>
            <person name="Nies D.H."/>
            <person name="Niesbach-Kloesgen U."/>
            <person name="Patschkowski T."/>
            <person name="Rueckert C."/>
            <person name="Rupp O."/>
            <person name="Schneiker S."/>
            <person name="Schuster S.C."/>
            <person name="Vorhoelter F.J."/>
            <person name="Weber E."/>
            <person name="Puehler A."/>
            <person name="Bonas U."/>
            <person name="Bartels D."/>
            <person name="Kaiser O."/>
        </authorList>
    </citation>
    <scope>NUCLEOTIDE SEQUENCE [LARGE SCALE GENOMIC DNA]</scope>
    <source>
        <strain>85-10</strain>
    </source>
</reference>
<evidence type="ECO:0000255" key="1">
    <source>
        <dbReference type="HAMAP-Rule" id="MF_00037"/>
    </source>
</evidence>
<accession>Q3BUJ8</accession>
<comment type="function">
    <text evidence="1">Cell wall formation.</text>
</comment>
<comment type="catalytic activity">
    <reaction evidence="1">
        <text>UDP-N-acetyl-alpha-D-muramate + NADP(+) = UDP-N-acetyl-3-O-(1-carboxyvinyl)-alpha-D-glucosamine + NADPH + H(+)</text>
        <dbReference type="Rhea" id="RHEA:12248"/>
        <dbReference type="ChEBI" id="CHEBI:15378"/>
        <dbReference type="ChEBI" id="CHEBI:57783"/>
        <dbReference type="ChEBI" id="CHEBI:58349"/>
        <dbReference type="ChEBI" id="CHEBI:68483"/>
        <dbReference type="ChEBI" id="CHEBI:70757"/>
        <dbReference type="EC" id="1.3.1.98"/>
    </reaction>
</comment>
<comment type="cofactor">
    <cofactor evidence="1">
        <name>FAD</name>
        <dbReference type="ChEBI" id="CHEBI:57692"/>
    </cofactor>
</comment>
<comment type="pathway">
    <text evidence="1">Cell wall biogenesis; peptidoglycan biosynthesis.</text>
</comment>
<comment type="subcellular location">
    <subcellularLocation>
        <location evidence="1">Cytoplasm</location>
    </subcellularLocation>
</comment>
<comment type="similarity">
    <text evidence="1">Belongs to the MurB family.</text>
</comment>
<keyword id="KW-0131">Cell cycle</keyword>
<keyword id="KW-0132">Cell division</keyword>
<keyword id="KW-0133">Cell shape</keyword>
<keyword id="KW-0961">Cell wall biogenesis/degradation</keyword>
<keyword id="KW-0963">Cytoplasm</keyword>
<keyword id="KW-0274">FAD</keyword>
<keyword id="KW-0285">Flavoprotein</keyword>
<keyword id="KW-0521">NADP</keyword>
<keyword id="KW-0560">Oxidoreductase</keyword>
<keyword id="KW-0573">Peptidoglycan synthesis</keyword>
<proteinExistence type="inferred from homology"/>
<feature type="chain" id="PRO_0000224738" description="UDP-N-acetylenolpyruvoylglucosamine reductase">
    <location>
        <begin position="1"/>
        <end position="350"/>
    </location>
</feature>
<feature type="domain" description="FAD-binding PCMH-type" evidence="1">
    <location>
        <begin position="24"/>
        <end position="195"/>
    </location>
</feature>
<feature type="active site" evidence="1">
    <location>
        <position position="172"/>
    </location>
</feature>
<feature type="active site" description="Proton donor" evidence="1">
    <location>
        <position position="245"/>
    </location>
</feature>
<feature type="active site" evidence="1">
    <location>
        <position position="342"/>
    </location>
</feature>
<sequence>MSDAVHTGWQLSEQAPLRALNTFHVEATARWLLNVHAPEALPQALAAPEIAGQPLLVLGSGSNVLLAGDPPGCVLCFDNRQTSIIAHRADHAIVRAGAGVNWHALVLYSLQQGLSGLENLALIPGTVGACPIQNIGAYGAQVGDFIHVVEAFDRHSQQFVRLDAADCAFGYRDSVFKQQPERYLIVAVEFNLPLLHELRLDYAGIREELARMGAELAGAADVAQAVINIRRRKLPDPDVLGNAGSFFKNPLLPSEQIAALQASFADMPVYPGEQAGQGKLSAAWLIEQCGWKGRREGDAGVSPEHALVLVNYGTATGAQLLDFARRIAESVRERYSVILEPEPRIIGAHW</sequence>
<name>MURB_XANE5</name>
<protein>
    <recommendedName>
        <fullName evidence="1">UDP-N-acetylenolpyruvoylglucosamine reductase</fullName>
        <ecNumber evidence="1">1.3.1.98</ecNumber>
    </recommendedName>
    <alternativeName>
        <fullName evidence="1">UDP-N-acetylmuramate dehydrogenase</fullName>
    </alternativeName>
</protein>